<keyword id="KW-0479">Metal-binding</keyword>
<keyword id="KW-1185">Reference proteome</keyword>
<keyword id="KW-0687">Ribonucleoprotein</keyword>
<keyword id="KW-0689">Ribosomal protein</keyword>
<keyword id="KW-0694">RNA-binding</keyword>
<keyword id="KW-0699">rRNA-binding</keyword>
<keyword id="KW-0862">Zinc</keyword>
<accession>B8I1M9</accession>
<organism>
    <name type="scientific">Ruminiclostridium cellulolyticum (strain ATCC 35319 / DSM 5812 / JCM 6584 / H10)</name>
    <name type="common">Clostridium cellulolyticum</name>
    <dbReference type="NCBI Taxonomy" id="394503"/>
    <lineage>
        <taxon>Bacteria</taxon>
        <taxon>Bacillati</taxon>
        <taxon>Bacillota</taxon>
        <taxon>Clostridia</taxon>
        <taxon>Eubacteriales</taxon>
        <taxon>Oscillospiraceae</taxon>
        <taxon>Ruminiclostridium</taxon>
    </lineage>
</organism>
<gene>
    <name evidence="1" type="primary">rpmE</name>
    <name type="ordered locus">Ccel_3375</name>
</gene>
<sequence>MKEGIHPDYSEAVVKCACGETFTTGSTKKSLHVEICSKCHPFYTGRQKLVDTGGRVDKFKKKYGIVDNE</sequence>
<evidence type="ECO:0000255" key="1">
    <source>
        <dbReference type="HAMAP-Rule" id="MF_00501"/>
    </source>
</evidence>
<evidence type="ECO:0000305" key="2"/>
<dbReference type="EMBL" id="CP001348">
    <property type="protein sequence ID" value="ACL77664.1"/>
    <property type="molecule type" value="Genomic_DNA"/>
</dbReference>
<dbReference type="RefSeq" id="WP_015926716.1">
    <property type="nucleotide sequence ID" value="NC_011898.1"/>
</dbReference>
<dbReference type="SMR" id="B8I1M9"/>
<dbReference type="STRING" id="394503.Ccel_3375"/>
<dbReference type="KEGG" id="cce:Ccel_3375"/>
<dbReference type="eggNOG" id="COG0254">
    <property type="taxonomic scope" value="Bacteria"/>
</dbReference>
<dbReference type="HOGENOM" id="CLU_114306_4_3_9"/>
<dbReference type="OrthoDB" id="9803251at2"/>
<dbReference type="Proteomes" id="UP000001349">
    <property type="component" value="Chromosome"/>
</dbReference>
<dbReference type="GO" id="GO:1990904">
    <property type="term" value="C:ribonucleoprotein complex"/>
    <property type="evidence" value="ECO:0007669"/>
    <property type="project" value="UniProtKB-KW"/>
</dbReference>
<dbReference type="GO" id="GO:0005840">
    <property type="term" value="C:ribosome"/>
    <property type="evidence" value="ECO:0007669"/>
    <property type="project" value="UniProtKB-KW"/>
</dbReference>
<dbReference type="GO" id="GO:0046872">
    <property type="term" value="F:metal ion binding"/>
    <property type="evidence" value="ECO:0007669"/>
    <property type="project" value="UniProtKB-KW"/>
</dbReference>
<dbReference type="GO" id="GO:0019843">
    <property type="term" value="F:rRNA binding"/>
    <property type="evidence" value="ECO:0007669"/>
    <property type="project" value="UniProtKB-KW"/>
</dbReference>
<dbReference type="GO" id="GO:0003735">
    <property type="term" value="F:structural constituent of ribosome"/>
    <property type="evidence" value="ECO:0007669"/>
    <property type="project" value="InterPro"/>
</dbReference>
<dbReference type="GO" id="GO:0006412">
    <property type="term" value="P:translation"/>
    <property type="evidence" value="ECO:0007669"/>
    <property type="project" value="UniProtKB-UniRule"/>
</dbReference>
<dbReference type="Gene3D" id="4.10.830.30">
    <property type="entry name" value="Ribosomal protein L31"/>
    <property type="match status" value="1"/>
</dbReference>
<dbReference type="HAMAP" id="MF_00501">
    <property type="entry name" value="Ribosomal_bL31_1"/>
    <property type="match status" value="1"/>
</dbReference>
<dbReference type="InterPro" id="IPR034704">
    <property type="entry name" value="Ribosomal_bL28/bL31-like_sf"/>
</dbReference>
<dbReference type="InterPro" id="IPR002150">
    <property type="entry name" value="Ribosomal_bL31"/>
</dbReference>
<dbReference type="InterPro" id="IPR027491">
    <property type="entry name" value="Ribosomal_bL31_A"/>
</dbReference>
<dbReference type="InterPro" id="IPR042105">
    <property type="entry name" value="Ribosomal_bL31_sf"/>
</dbReference>
<dbReference type="NCBIfam" id="TIGR00105">
    <property type="entry name" value="L31"/>
    <property type="match status" value="1"/>
</dbReference>
<dbReference type="NCBIfam" id="NF000612">
    <property type="entry name" value="PRK00019.1"/>
    <property type="match status" value="1"/>
</dbReference>
<dbReference type="NCBIfam" id="NF001809">
    <property type="entry name" value="PRK00528.1"/>
    <property type="match status" value="1"/>
</dbReference>
<dbReference type="PANTHER" id="PTHR33280">
    <property type="entry name" value="50S RIBOSOMAL PROTEIN L31, CHLOROPLASTIC"/>
    <property type="match status" value="1"/>
</dbReference>
<dbReference type="PANTHER" id="PTHR33280:SF1">
    <property type="entry name" value="LARGE RIBOSOMAL SUBUNIT PROTEIN BL31C"/>
    <property type="match status" value="1"/>
</dbReference>
<dbReference type="Pfam" id="PF01197">
    <property type="entry name" value="Ribosomal_L31"/>
    <property type="match status" value="1"/>
</dbReference>
<dbReference type="PRINTS" id="PR01249">
    <property type="entry name" value="RIBOSOMALL31"/>
</dbReference>
<dbReference type="SUPFAM" id="SSF143800">
    <property type="entry name" value="L28p-like"/>
    <property type="match status" value="1"/>
</dbReference>
<dbReference type="PROSITE" id="PS01143">
    <property type="entry name" value="RIBOSOMAL_L31"/>
    <property type="match status" value="1"/>
</dbReference>
<proteinExistence type="inferred from homology"/>
<feature type="chain" id="PRO_1000176956" description="Large ribosomal subunit protein bL31">
    <location>
        <begin position="1"/>
        <end position="69"/>
    </location>
</feature>
<feature type="binding site" evidence="1">
    <location>
        <position position="16"/>
    </location>
    <ligand>
        <name>Zn(2+)</name>
        <dbReference type="ChEBI" id="CHEBI:29105"/>
    </ligand>
</feature>
<feature type="binding site" evidence="1">
    <location>
        <position position="18"/>
    </location>
    <ligand>
        <name>Zn(2+)</name>
        <dbReference type="ChEBI" id="CHEBI:29105"/>
    </ligand>
</feature>
<feature type="binding site" evidence="1">
    <location>
        <position position="36"/>
    </location>
    <ligand>
        <name>Zn(2+)</name>
        <dbReference type="ChEBI" id="CHEBI:29105"/>
    </ligand>
</feature>
<feature type="binding site" evidence="1">
    <location>
        <position position="39"/>
    </location>
    <ligand>
        <name>Zn(2+)</name>
        <dbReference type="ChEBI" id="CHEBI:29105"/>
    </ligand>
</feature>
<reference key="1">
    <citation type="submission" date="2009-01" db="EMBL/GenBank/DDBJ databases">
        <title>Complete sequence of Clostridium cellulolyticum H10.</title>
        <authorList>
            <consortium name="US DOE Joint Genome Institute"/>
            <person name="Lucas S."/>
            <person name="Copeland A."/>
            <person name="Lapidus A."/>
            <person name="Glavina del Rio T."/>
            <person name="Dalin E."/>
            <person name="Tice H."/>
            <person name="Bruce D."/>
            <person name="Goodwin L."/>
            <person name="Pitluck S."/>
            <person name="Chertkov O."/>
            <person name="Saunders E."/>
            <person name="Brettin T."/>
            <person name="Detter J.C."/>
            <person name="Han C."/>
            <person name="Larimer F."/>
            <person name="Land M."/>
            <person name="Hauser L."/>
            <person name="Kyrpides N."/>
            <person name="Ivanova N."/>
            <person name="Zhou J."/>
            <person name="Richardson P."/>
        </authorList>
    </citation>
    <scope>NUCLEOTIDE SEQUENCE [LARGE SCALE GENOMIC DNA]</scope>
    <source>
        <strain>ATCC 35319 / DSM 5812 / JCM 6584 / H10</strain>
    </source>
</reference>
<comment type="function">
    <text evidence="1">Binds the 23S rRNA.</text>
</comment>
<comment type="cofactor">
    <cofactor evidence="1">
        <name>Zn(2+)</name>
        <dbReference type="ChEBI" id="CHEBI:29105"/>
    </cofactor>
    <text evidence="1">Binds 1 zinc ion per subunit.</text>
</comment>
<comment type="subunit">
    <text evidence="1">Part of the 50S ribosomal subunit.</text>
</comment>
<comment type="similarity">
    <text evidence="1">Belongs to the bacterial ribosomal protein bL31 family. Type A subfamily.</text>
</comment>
<name>RL31_RUMCH</name>
<protein>
    <recommendedName>
        <fullName evidence="1">Large ribosomal subunit protein bL31</fullName>
    </recommendedName>
    <alternativeName>
        <fullName evidence="2">50S ribosomal protein L31</fullName>
    </alternativeName>
</protein>